<accession>Q328K3</accession>
<dbReference type="EC" id="2.7.1.194" evidence="2"/>
<dbReference type="EMBL" id="CP000034">
    <property type="protein sequence ID" value="ABB64252.1"/>
    <property type="molecule type" value="Genomic_DNA"/>
</dbReference>
<dbReference type="RefSeq" id="WP_000218365.1">
    <property type="nucleotide sequence ID" value="NC_007606.1"/>
</dbReference>
<dbReference type="RefSeq" id="YP_405743.1">
    <property type="nucleotide sequence ID" value="NC_007606.1"/>
</dbReference>
<dbReference type="SMR" id="Q328K3"/>
<dbReference type="STRING" id="300267.SDY_4363"/>
<dbReference type="EnsemblBacteria" id="ABB64252">
    <property type="protein sequence ID" value="ABB64252"/>
    <property type="gene ID" value="SDY_4363"/>
</dbReference>
<dbReference type="KEGG" id="sdy:SDY_4363"/>
<dbReference type="PATRIC" id="fig|300267.13.peg.5151"/>
<dbReference type="HOGENOM" id="CLU_159248_0_0_6"/>
<dbReference type="Proteomes" id="UP000002716">
    <property type="component" value="Chromosome"/>
</dbReference>
<dbReference type="GO" id="GO:0005737">
    <property type="term" value="C:cytoplasm"/>
    <property type="evidence" value="ECO:0007669"/>
    <property type="project" value="UniProtKB-SubCell"/>
</dbReference>
<dbReference type="GO" id="GO:0016301">
    <property type="term" value="F:kinase activity"/>
    <property type="evidence" value="ECO:0007669"/>
    <property type="project" value="UniProtKB-KW"/>
</dbReference>
<dbReference type="GO" id="GO:0008982">
    <property type="term" value="F:protein-N(PI)-phosphohistidine-sugar phosphotransferase activity"/>
    <property type="evidence" value="ECO:0007669"/>
    <property type="project" value="InterPro"/>
</dbReference>
<dbReference type="GO" id="GO:0009401">
    <property type="term" value="P:phosphoenolpyruvate-dependent sugar phosphotransferase system"/>
    <property type="evidence" value="ECO:0007669"/>
    <property type="project" value="UniProtKB-KW"/>
</dbReference>
<dbReference type="CDD" id="cd05563">
    <property type="entry name" value="PTS_IIB_ascorbate"/>
    <property type="match status" value="1"/>
</dbReference>
<dbReference type="FunFam" id="3.40.50.2300:FF:000030">
    <property type="entry name" value="PTS system, ascorbate-specific, IIB component"/>
    <property type="match status" value="1"/>
</dbReference>
<dbReference type="Gene3D" id="3.40.50.2300">
    <property type="match status" value="1"/>
</dbReference>
<dbReference type="InterPro" id="IPR036095">
    <property type="entry name" value="PTS_EIIB-like_sf"/>
</dbReference>
<dbReference type="InterPro" id="IPR013011">
    <property type="entry name" value="PTS_EIIB_2"/>
</dbReference>
<dbReference type="InterPro" id="IPR003501">
    <property type="entry name" value="PTS_EIIB_2/3"/>
</dbReference>
<dbReference type="NCBIfam" id="NF007586">
    <property type="entry name" value="PRK10222.1"/>
    <property type="match status" value="1"/>
</dbReference>
<dbReference type="Pfam" id="PF02302">
    <property type="entry name" value="PTS_IIB"/>
    <property type="match status" value="1"/>
</dbReference>
<dbReference type="SUPFAM" id="SSF52794">
    <property type="entry name" value="PTS system IIB component-like"/>
    <property type="match status" value="1"/>
</dbReference>
<dbReference type="PROSITE" id="PS51099">
    <property type="entry name" value="PTS_EIIB_TYPE_2"/>
    <property type="match status" value="1"/>
</dbReference>
<feature type="chain" id="PRO_0000230328" description="Ascorbate-specific PTS system EIIB component">
    <location>
        <begin position="1"/>
        <end position="101"/>
    </location>
</feature>
<feature type="domain" description="PTS EIIB type-2" evidence="3">
    <location>
        <begin position="3"/>
        <end position="96"/>
    </location>
</feature>
<feature type="active site" description="Phosphocysteine intermediate" evidence="1 4">
    <location>
        <position position="9"/>
    </location>
</feature>
<feature type="modified residue" description="Phosphocysteine" evidence="1 4">
    <location>
        <position position="9"/>
    </location>
</feature>
<comment type="function">
    <text evidence="2">The phosphoenolpyruvate-dependent sugar phosphotransferase system (sugar PTS), a major carbohydrate active transport system, catalyzes the phosphorylation of incoming sugar substrates concomitantly with their translocation across the cell membrane. The enzyme II UlaABC PTS system is involved in ascorbate transport.</text>
</comment>
<comment type="catalytic activity">
    <reaction evidence="2">
        <text>N(pros)-phospho-L-histidyl-[protein] + L-ascorbate(out) = L-ascorbate 6-phosphate(in) + L-histidyl-[protein]</text>
        <dbReference type="Rhea" id="RHEA:42436"/>
        <dbReference type="Rhea" id="RHEA-COMP:9745"/>
        <dbReference type="Rhea" id="RHEA-COMP:9746"/>
        <dbReference type="ChEBI" id="CHEBI:29979"/>
        <dbReference type="ChEBI" id="CHEBI:38290"/>
        <dbReference type="ChEBI" id="CHEBI:61698"/>
        <dbReference type="ChEBI" id="CHEBI:64837"/>
        <dbReference type="EC" id="2.7.1.194"/>
    </reaction>
</comment>
<comment type="subcellular location">
    <subcellularLocation>
        <location evidence="4">Cytoplasm</location>
    </subcellularLocation>
</comment>
<comment type="induction">
    <text evidence="2">Induced by L-ascorbate. Repressed by UlaR.</text>
</comment>
<comment type="domain">
    <text evidence="3">The PTS EIIB type-2 domain is phosphorylated by phospho-EIIA on a cysteinyl residue. Then, it transfers the phosphoryl group to the sugar substrate concomitantly with the sugar uptake processed by the PTS EIIC type-2 domain.</text>
</comment>
<keyword id="KW-0963">Cytoplasm</keyword>
<keyword id="KW-0418">Kinase</keyword>
<keyword id="KW-0597">Phosphoprotein</keyword>
<keyword id="KW-0598">Phosphotransferase system</keyword>
<keyword id="KW-1185">Reference proteome</keyword>
<keyword id="KW-0808">Transferase</keyword>
<keyword id="KW-0813">Transport</keyword>
<evidence type="ECO:0000250" key="1">
    <source>
        <dbReference type="UniProtKB" id="P00550"/>
    </source>
</evidence>
<evidence type="ECO:0000250" key="2">
    <source>
        <dbReference type="UniProtKB" id="P69822"/>
    </source>
</evidence>
<evidence type="ECO:0000255" key="3">
    <source>
        <dbReference type="PROSITE-ProRule" id="PRU00422"/>
    </source>
</evidence>
<evidence type="ECO:0000305" key="4"/>
<organism>
    <name type="scientific">Shigella dysenteriae serotype 1 (strain Sd197)</name>
    <dbReference type="NCBI Taxonomy" id="300267"/>
    <lineage>
        <taxon>Bacteria</taxon>
        <taxon>Pseudomonadati</taxon>
        <taxon>Pseudomonadota</taxon>
        <taxon>Gammaproteobacteria</taxon>
        <taxon>Enterobacterales</taxon>
        <taxon>Enterobacteriaceae</taxon>
        <taxon>Shigella</taxon>
    </lineage>
</organism>
<gene>
    <name type="primary">ulaB</name>
    <name type="ordered locus">SDY_4363</name>
</gene>
<protein>
    <recommendedName>
        <fullName evidence="2">Ascorbate-specific PTS system EIIB component</fullName>
        <ecNumber evidence="2">2.7.1.194</ecNumber>
    </recommendedName>
    <alternativeName>
        <fullName evidence="2">Ascorbate-specific phosphotransferase enzyme IIB component</fullName>
    </alternativeName>
</protein>
<reference key="1">
    <citation type="journal article" date="2005" name="Nucleic Acids Res.">
        <title>Genome dynamics and diversity of Shigella species, the etiologic agents of bacillary dysentery.</title>
        <authorList>
            <person name="Yang F."/>
            <person name="Yang J."/>
            <person name="Zhang X."/>
            <person name="Chen L."/>
            <person name="Jiang Y."/>
            <person name="Yan Y."/>
            <person name="Tang X."/>
            <person name="Wang J."/>
            <person name="Xiong Z."/>
            <person name="Dong J."/>
            <person name="Xue Y."/>
            <person name="Zhu Y."/>
            <person name="Xu X."/>
            <person name="Sun L."/>
            <person name="Chen S."/>
            <person name="Nie H."/>
            <person name="Peng J."/>
            <person name="Xu J."/>
            <person name="Wang Y."/>
            <person name="Yuan Z."/>
            <person name="Wen Y."/>
            <person name="Yao Z."/>
            <person name="Shen Y."/>
            <person name="Qiang B."/>
            <person name="Hou Y."/>
            <person name="Yu J."/>
            <person name="Jin Q."/>
        </authorList>
    </citation>
    <scope>NUCLEOTIDE SEQUENCE [LARGE SCALE GENOMIC DNA]</scope>
    <source>
        <strain>Sd197</strain>
    </source>
</reference>
<name>ULAB_SHIDS</name>
<proteinExistence type="inferred from homology"/>
<sequence length="101" mass="10913">MTVRILAVCGNGQGSSMIMKMKVDQFLTQSNIDHTVNSCAVGEYKSELSGADIIIASTHMAGEITVTGNKYVVGVRNMLSPADFGPKLLKVIKEHFPQDVK</sequence>